<evidence type="ECO:0000255" key="1">
    <source>
        <dbReference type="HAMAP-Rule" id="MF_00360"/>
    </source>
</evidence>
<evidence type="ECO:0000256" key="2">
    <source>
        <dbReference type="SAM" id="MobiDB-lite"/>
    </source>
</evidence>
<evidence type="ECO:0000305" key="3"/>
<organism>
    <name type="scientific">Xylella fastidiosa (strain M12)</name>
    <dbReference type="NCBI Taxonomy" id="405440"/>
    <lineage>
        <taxon>Bacteria</taxon>
        <taxon>Pseudomonadati</taxon>
        <taxon>Pseudomonadota</taxon>
        <taxon>Gammaproteobacteria</taxon>
        <taxon>Lysobacterales</taxon>
        <taxon>Lysobacteraceae</taxon>
        <taxon>Xylella</taxon>
    </lineage>
</organism>
<comment type="function">
    <text evidence="1">Binds together with bS18 to 16S ribosomal RNA.</text>
</comment>
<comment type="similarity">
    <text evidence="1">Belongs to the bacterial ribosomal protein bS6 family.</text>
</comment>
<gene>
    <name evidence="1" type="primary">rpsF</name>
    <name type="ordered locus">Xfasm12_2133</name>
</gene>
<keyword id="KW-0687">Ribonucleoprotein</keyword>
<keyword id="KW-0689">Ribosomal protein</keyword>
<keyword id="KW-0694">RNA-binding</keyword>
<keyword id="KW-0699">rRNA-binding</keyword>
<sequence>MGRHYEIVLLVHPDQSEQVQAMLERYKALIENGHGKIHRLEDWGRRQLAYPIQKLVKAHYLMMNIEVEQSVLNELVDLFRFNDAILRHLAIKRSGPYTEQSFIMKSKDDKGDKPERRRRDDDESGDVGVSNDSDNDGGNAEAA</sequence>
<reference key="1">
    <citation type="journal article" date="2010" name="J. Bacteriol.">
        <title>Whole genome sequences of two Xylella fastidiosa strains (M12 and M23) causing almond leaf scorch disease in California.</title>
        <authorList>
            <person name="Chen J."/>
            <person name="Xie G."/>
            <person name="Han S."/>
            <person name="Chertkov O."/>
            <person name="Sims D."/>
            <person name="Civerolo E.L."/>
        </authorList>
    </citation>
    <scope>NUCLEOTIDE SEQUENCE [LARGE SCALE GENOMIC DNA]</scope>
    <source>
        <strain>M12</strain>
    </source>
</reference>
<protein>
    <recommendedName>
        <fullName evidence="1">Small ribosomal subunit protein bS6</fullName>
    </recommendedName>
    <alternativeName>
        <fullName evidence="3">30S ribosomal protein S6</fullName>
    </alternativeName>
</protein>
<dbReference type="EMBL" id="CP000941">
    <property type="protein sequence ID" value="ACA12990.1"/>
    <property type="molecule type" value="Genomic_DNA"/>
</dbReference>
<dbReference type="RefSeq" id="WP_004084637.1">
    <property type="nucleotide sequence ID" value="NC_010513.1"/>
</dbReference>
<dbReference type="SMR" id="B0U5H2"/>
<dbReference type="KEGG" id="xfm:Xfasm12_2133"/>
<dbReference type="HOGENOM" id="CLU_113441_6_0_6"/>
<dbReference type="GO" id="GO:0022627">
    <property type="term" value="C:cytosolic small ribosomal subunit"/>
    <property type="evidence" value="ECO:0007669"/>
    <property type="project" value="TreeGrafter"/>
</dbReference>
<dbReference type="GO" id="GO:0070181">
    <property type="term" value="F:small ribosomal subunit rRNA binding"/>
    <property type="evidence" value="ECO:0007669"/>
    <property type="project" value="TreeGrafter"/>
</dbReference>
<dbReference type="GO" id="GO:0003735">
    <property type="term" value="F:structural constituent of ribosome"/>
    <property type="evidence" value="ECO:0007669"/>
    <property type="project" value="InterPro"/>
</dbReference>
<dbReference type="GO" id="GO:0006412">
    <property type="term" value="P:translation"/>
    <property type="evidence" value="ECO:0007669"/>
    <property type="project" value="UniProtKB-UniRule"/>
</dbReference>
<dbReference type="CDD" id="cd00473">
    <property type="entry name" value="bS6"/>
    <property type="match status" value="1"/>
</dbReference>
<dbReference type="Gene3D" id="3.30.70.60">
    <property type="match status" value="1"/>
</dbReference>
<dbReference type="HAMAP" id="MF_00360">
    <property type="entry name" value="Ribosomal_bS6"/>
    <property type="match status" value="1"/>
</dbReference>
<dbReference type="InterPro" id="IPR000529">
    <property type="entry name" value="Ribosomal_bS6"/>
</dbReference>
<dbReference type="InterPro" id="IPR035980">
    <property type="entry name" value="Ribosomal_bS6_sf"/>
</dbReference>
<dbReference type="InterPro" id="IPR020814">
    <property type="entry name" value="Ribosomal_S6_plastid/chlpt"/>
</dbReference>
<dbReference type="InterPro" id="IPR014717">
    <property type="entry name" value="Transl_elong_EF1B/ribsomal_bS6"/>
</dbReference>
<dbReference type="NCBIfam" id="TIGR00166">
    <property type="entry name" value="S6"/>
    <property type="match status" value="1"/>
</dbReference>
<dbReference type="PANTHER" id="PTHR21011">
    <property type="entry name" value="MITOCHONDRIAL 28S RIBOSOMAL PROTEIN S6"/>
    <property type="match status" value="1"/>
</dbReference>
<dbReference type="PANTHER" id="PTHR21011:SF1">
    <property type="entry name" value="SMALL RIBOSOMAL SUBUNIT PROTEIN BS6M"/>
    <property type="match status" value="1"/>
</dbReference>
<dbReference type="Pfam" id="PF01250">
    <property type="entry name" value="Ribosomal_S6"/>
    <property type="match status" value="1"/>
</dbReference>
<dbReference type="SUPFAM" id="SSF54995">
    <property type="entry name" value="Ribosomal protein S6"/>
    <property type="match status" value="1"/>
</dbReference>
<name>RS6_XYLFM</name>
<accession>B0U5H2</accession>
<feature type="chain" id="PRO_1000120826" description="Small ribosomal subunit protein bS6">
    <location>
        <begin position="1"/>
        <end position="143"/>
    </location>
</feature>
<feature type="region of interest" description="Disordered" evidence="2">
    <location>
        <begin position="100"/>
        <end position="143"/>
    </location>
</feature>
<feature type="compositionally biased region" description="Basic and acidic residues" evidence="2">
    <location>
        <begin position="105"/>
        <end position="121"/>
    </location>
</feature>
<feature type="compositionally biased region" description="Low complexity" evidence="2">
    <location>
        <begin position="126"/>
        <end position="143"/>
    </location>
</feature>
<proteinExistence type="inferred from homology"/>